<keyword id="KW-0472">Membrane</keyword>
<keyword id="KW-0812">Transmembrane</keyword>
<keyword id="KW-1133">Transmembrane helix</keyword>
<proteinExistence type="uncertain"/>
<organism>
    <name type="scientific">Saccharomyces cerevisiae (strain ATCC 204508 / S288c)</name>
    <name type="common">Baker's yeast</name>
    <dbReference type="NCBI Taxonomy" id="559292"/>
    <lineage>
        <taxon>Eukaryota</taxon>
        <taxon>Fungi</taxon>
        <taxon>Dikarya</taxon>
        <taxon>Ascomycota</taxon>
        <taxon>Saccharomycotina</taxon>
        <taxon>Saccharomycetes</taxon>
        <taxon>Saccharomycetales</taxon>
        <taxon>Saccharomycetaceae</taxon>
        <taxon>Saccharomyces</taxon>
    </lineage>
</organism>
<accession>A0A023PXH6</accession>
<dbReference type="EMBL" id="KJ412291">
    <property type="protein sequence ID" value="AHX39334.1"/>
    <property type="molecule type" value="Genomic_DNA"/>
</dbReference>
<dbReference type="PIR" id="S69869">
    <property type="entry name" value="S69869"/>
</dbReference>
<dbReference type="PaxDb" id="4932-YMR172C-A"/>
<dbReference type="EnsemblFungi" id="YMR172C-A_mRNA">
    <property type="protein sequence ID" value="YMR172C-A"/>
    <property type="gene ID" value="YMR172C-A"/>
</dbReference>
<dbReference type="AGR" id="SGD:S000004782"/>
<dbReference type="SGD" id="S000004782">
    <property type="gene designation" value="YMR172C-A"/>
</dbReference>
<dbReference type="HOGENOM" id="CLU_1971770_0_0_1"/>
<dbReference type="GO" id="GO:0016020">
    <property type="term" value="C:membrane"/>
    <property type="evidence" value="ECO:0007669"/>
    <property type="project" value="UniProtKB-SubCell"/>
</dbReference>
<reference key="1">
    <citation type="journal article" date="1997" name="Nature">
        <title>The nucleotide sequence of Saccharomyces cerevisiae chromosome XIII.</title>
        <authorList>
            <person name="Bowman S."/>
            <person name="Churcher C.M."/>
            <person name="Badcock K."/>
            <person name="Brown D."/>
            <person name="Chillingworth T."/>
            <person name="Connor R."/>
            <person name="Dedman K."/>
            <person name="Devlin K."/>
            <person name="Gentles S."/>
            <person name="Hamlin N."/>
            <person name="Hunt S."/>
            <person name="Jagels K."/>
            <person name="Lye G."/>
            <person name="Moule S."/>
            <person name="Odell C."/>
            <person name="Pearson D."/>
            <person name="Rajandream M.A."/>
            <person name="Rice P."/>
            <person name="Skelton J."/>
            <person name="Walsh S.V."/>
            <person name="Whitehead S."/>
            <person name="Barrell B.G."/>
        </authorList>
    </citation>
    <scope>NUCLEOTIDE SEQUENCE [LARGE SCALE GENOMIC DNA]</scope>
    <source>
        <strain>ATCC 204508 / S288c</strain>
    </source>
</reference>
<reference key="2">
    <citation type="journal article" date="2014" name="G3 (Bethesda)">
        <title>The reference genome sequence of Saccharomyces cerevisiae: Then and now.</title>
        <authorList>
            <person name="Engel S.R."/>
            <person name="Dietrich F.S."/>
            <person name="Fisk D.G."/>
            <person name="Binkley G."/>
            <person name="Balakrishnan R."/>
            <person name="Costanzo M.C."/>
            <person name="Dwight S.S."/>
            <person name="Hitz B.C."/>
            <person name="Karra K."/>
            <person name="Nash R.S."/>
            <person name="Weng S."/>
            <person name="Wong E.D."/>
            <person name="Lloyd P."/>
            <person name="Skrzypek M.S."/>
            <person name="Miyasato S.R."/>
            <person name="Simison M."/>
            <person name="Cherry J.M."/>
        </authorList>
    </citation>
    <scope>GENOME REANNOTATION</scope>
    <source>
        <strain>ATCC 204508 / S288c</strain>
    </source>
</reference>
<gene>
    <name evidence="4" type="ordered locus">YMR172C-A</name>
</gene>
<protein>
    <recommendedName>
        <fullName evidence="2">Putative uncharacterized membrane protein YMR172C-A</fullName>
    </recommendedName>
</protein>
<feature type="chain" id="PRO_0000431055" description="Putative uncharacterized membrane protein YMR172C-A">
    <location>
        <begin position="1"/>
        <end position="127"/>
    </location>
</feature>
<feature type="transmembrane region" description="Helical; Name=1" evidence="1">
    <location>
        <begin position="48"/>
        <end position="68"/>
    </location>
</feature>
<feature type="transmembrane region" description="Helical; Name=2" evidence="1">
    <location>
        <begin position="83"/>
        <end position="103"/>
    </location>
</feature>
<evidence type="ECO:0000255" key="1"/>
<evidence type="ECO:0000305" key="2"/>
<evidence type="ECO:0000305" key="3">
    <source>
    </source>
</evidence>
<evidence type="ECO:0000312" key="4">
    <source>
        <dbReference type="SGD" id="S000004782"/>
    </source>
</evidence>
<comment type="subcellular location">
    <subcellularLocation>
        <location evidence="1">Membrane</location>
        <topology evidence="1">Multi-pass membrane protein</topology>
    </subcellularLocation>
</comment>
<comment type="miscellaneous">
    <text evidence="2">Partially overlaps HOT1.</text>
</comment>
<comment type="caution">
    <text evidence="3">Product of a dubious gene prediction unlikely to encode a functional protein. Because of that it is not part of the S.cerevisiae S288c complete/reference proteome set.</text>
</comment>
<sequence>MYLCYTCFFLPSYDCKRLFTIVRAYIPARLSCNQPMVLFFTSPSSSSLYSLLFSKVSIISCAVLPLSIPFRMNLYNLFRLEKVFLFLLSLHLLPYLASRCLIDGFPLIPVSYSSHIVFTSVGAFNIL</sequence>
<name>YM172_YEAST</name>